<feature type="chain" id="PRO_0000354694" description="Inhibitor of growth protein 3">
    <location>
        <begin position="1"/>
        <end position="416"/>
    </location>
</feature>
<feature type="zinc finger region" description="PHD-type" evidence="3">
    <location>
        <begin position="358"/>
        <end position="407"/>
    </location>
</feature>
<feature type="region of interest" description="Disordered" evidence="4">
    <location>
        <begin position="126"/>
        <end position="165"/>
    </location>
</feature>
<feature type="region of interest" description="Disordered" evidence="4">
    <location>
        <begin position="177"/>
        <end position="198"/>
    </location>
</feature>
<feature type="region of interest" description="Disordered" evidence="4">
    <location>
        <begin position="283"/>
        <end position="319"/>
    </location>
</feature>
<feature type="compositionally biased region" description="Basic residues" evidence="4">
    <location>
        <begin position="136"/>
        <end position="152"/>
    </location>
</feature>
<feature type="compositionally biased region" description="Basic and acidic residues" evidence="4">
    <location>
        <begin position="156"/>
        <end position="165"/>
    </location>
</feature>
<feature type="compositionally biased region" description="Polar residues" evidence="4">
    <location>
        <begin position="177"/>
        <end position="187"/>
    </location>
</feature>
<feature type="compositionally biased region" description="Low complexity" evidence="4">
    <location>
        <begin position="189"/>
        <end position="198"/>
    </location>
</feature>
<feature type="compositionally biased region" description="Low complexity" evidence="4">
    <location>
        <begin position="283"/>
        <end position="293"/>
    </location>
</feature>
<feature type="compositionally biased region" description="Low complexity" evidence="4">
    <location>
        <begin position="302"/>
        <end position="319"/>
    </location>
</feature>
<feature type="binding site" evidence="2">
    <location>
        <position position="361"/>
    </location>
    <ligand>
        <name>Zn(2+)</name>
        <dbReference type="ChEBI" id="CHEBI:29105"/>
        <label>1</label>
    </ligand>
</feature>
<feature type="binding site" evidence="2">
    <location>
        <position position="363"/>
    </location>
    <ligand>
        <name>Zn(2+)</name>
        <dbReference type="ChEBI" id="CHEBI:29105"/>
        <label>1</label>
    </ligand>
</feature>
<feature type="binding site" evidence="2">
    <location>
        <position position="374"/>
    </location>
    <ligand>
        <name>Zn(2+)</name>
        <dbReference type="ChEBI" id="CHEBI:29105"/>
        <label>2</label>
    </ligand>
</feature>
<feature type="binding site" evidence="2">
    <location>
        <position position="379"/>
    </location>
    <ligand>
        <name>Zn(2+)</name>
        <dbReference type="ChEBI" id="CHEBI:29105"/>
        <label>2</label>
    </ligand>
</feature>
<feature type="binding site" evidence="2">
    <location>
        <position position="385"/>
    </location>
    <ligand>
        <name>Zn(2+)</name>
        <dbReference type="ChEBI" id="CHEBI:29105"/>
        <label>1</label>
    </ligand>
</feature>
<feature type="binding site" evidence="2">
    <location>
        <position position="388"/>
    </location>
    <ligand>
        <name>Zn(2+)</name>
        <dbReference type="ChEBI" id="CHEBI:29105"/>
        <label>1</label>
    </ligand>
</feature>
<feature type="binding site" evidence="2">
    <location>
        <position position="401"/>
    </location>
    <ligand>
        <name>Zn(2+)</name>
        <dbReference type="ChEBI" id="CHEBI:29105"/>
        <label>2</label>
    </ligand>
</feature>
<feature type="binding site" evidence="2">
    <location>
        <position position="404"/>
    </location>
    <ligand>
        <name>Zn(2+)</name>
        <dbReference type="ChEBI" id="CHEBI:29105"/>
        <label>2</label>
    </ligand>
</feature>
<feature type="site" description="Histone H3K4me3 binding" evidence="2">
    <location>
        <position position="360"/>
    </location>
</feature>
<feature type="site" description="Histone H3K4me3 binding" evidence="2">
    <location>
        <position position="371"/>
    </location>
</feature>
<feature type="site" description="Histone H3K4me3 binding" evidence="2">
    <location>
        <position position="375"/>
    </location>
</feature>
<feature type="site" description="Histone H3K4me3 binding" evidence="2">
    <location>
        <position position="383"/>
    </location>
</feature>
<organism>
    <name type="scientific">Xenopus laevis</name>
    <name type="common">African clawed frog</name>
    <dbReference type="NCBI Taxonomy" id="8355"/>
    <lineage>
        <taxon>Eukaryota</taxon>
        <taxon>Metazoa</taxon>
        <taxon>Chordata</taxon>
        <taxon>Craniata</taxon>
        <taxon>Vertebrata</taxon>
        <taxon>Euteleostomi</taxon>
        <taxon>Amphibia</taxon>
        <taxon>Batrachia</taxon>
        <taxon>Anura</taxon>
        <taxon>Pipoidea</taxon>
        <taxon>Pipidae</taxon>
        <taxon>Xenopodinae</taxon>
        <taxon>Xenopus</taxon>
        <taxon>Xenopus</taxon>
    </lineage>
</organism>
<protein>
    <recommendedName>
        <fullName>Inhibitor of growth protein 3</fullName>
    </recommendedName>
</protein>
<gene>
    <name type="primary">ing3</name>
</gene>
<accession>Q7ZX31</accession>
<sequence length="416" mass="46183">MLYLEDYLEMIEQLPMDLRDRFTEMREMDLQVQNAMDQLEQRVGEFFMNAKKNKPEWREEQMASIKKDYFKALEDADEKVQLANQIYDLVDRHLRKLDQELAKFKMELEADNAGITEILERRSLELDTPSQPVNNHHVHSHSSGEKRKHIPSSHHSTTDHVPEKKFKSEALLSTLTSDASKENTAGCRTNLSSSSTNNVYNVNSSQPLTSYNISSLSTGAAAGAITMAAAQAVQATAQMKEGRRTSSLKASYEAFKNTDLLGISLSRDSASYSSSALASTLTQTLTSSATTDSRSGRKSKSNNKSASQQSSSSSSSSSLSSCSSSSALAHELSHQQTAAIPESDTNSQVDWTYDPNEPRYCICNQVSYGEMVGCDNQDCPIEWFHYGCVGLSEAPKGKWYCPQCTAAMKRRGSRHK</sequence>
<proteinExistence type="evidence at transcript level"/>
<comment type="function">
    <text evidence="1">Component of the NuA4 histone acetyltransferase (HAT) complex which is involved in transcriptional activation of select genes principally by acetylation of nucleosomal histone H4 and H2A. This modification may both alter nucleosome - DNA interactions and promote interaction of the modified histones with other proteins which positively regulate transcription (By similarity). NuA4 may also play a direct role in DNA repair when directly recruited to sites of DNA damage (By similarity).</text>
</comment>
<comment type="subunit">
    <text evidence="1">Interacts with H3K4me3 and to a lesser extent with H3K4me2. Component of the NuA4 histone acetyltransferase complex.</text>
</comment>
<comment type="subcellular location">
    <subcellularLocation>
        <location evidence="1">Nucleus</location>
    </subcellularLocation>
</comment>
<comment type="domain">
    <text evidence="1">The PHD-type zinc finger mediates the binding to H3K4me3.</text>
</comment>
<comment type="similarity">
    <text evidence="5">Belongs to the ING family.</text>
</comment>
<evidence type="ECO:0000250" key="1"/>
<evidence type="ECO:0000250" key="2">
    <source>
        <dbReference type="UniProtKB" id="Q9UK53"/>
    </source>
</evidence>
<evidence type="ECO:0000255" key="3">
    <source>
        <dbReference type="PROSITE-ProRule" id="PRU00146"/>
    </source>
</evidence>
<evidence type="ECO:0000256" key="4">
    <source>
        <dbReference type="SAM" id="MobiDB-lite"/>
    </source>
</evidence>
<evidence type="ECO:0000305" key="5"/>
<keyword id="KW-0156">Chromatin regulator</keyword>
<keyword id="KW-0341">Growth regulation</keyword>
<keyword id="KW-0479">Metal-binding</keyword>
<keyword id="KW-0539">Nucleus</keyword>
<keyword id="KW-1185">Reference proteome</keyword>
<keyword id="KW-0804">Transcription</keyword>
<keyword id="KW-0805">Transcription regulation</keyword>
<keyword id="KW-0862">Zinc</keyword>
<keyword id="KW-0863">Zinc-finger</keyword>
<reference key="1">
    <citation type="submission" date="2003-01" db="EMBL/GenBank/DDBJ databases">
        <authorList>
            <consortium name="NIH - Xenopus Gene Collection (XGC) project"/>
        </authorList>
    </citation>
    <scope>NUCLEOTIDE SEQUENCE [LARGE SCALE MRNA]</scope>
    <source>
        <tissue>Embryo</tissue>
    </source>
</reference>
<name>ING3_XENLA</name>
<dbReference type="EMBL" id="BC045263">
    <property type="protein sequence ID" value="AAH45263.1"/>
    <property type="molecule type" value="mRNA"/>
</dbReference>
<dbReference type="RefSeq" id="NP_001080280.1">
    <property type="nucleotide sequence ID" value="NM_001086811.1"/>
</dbReference>
<dbReference type="BMRB" id="Q7ZX31"/>
<dbReference type="SMR" id="Q7ZX31"/>
<dbReference type="BioGRID" id="98214">
    <property type="interactions" value="1"/>
</dbReference>
<dbReference type="DNASU" id="379972"/>
<dbReference type="GeneID" id="379972"/>
<dbReference type="KEGG" id="xla:379972"/>
<dbReference type="AGR" id="Xenbase:XB-GENE-972311"/>
<dbReference type="CTD" id="379972"/>
<dbReference type="Xenbase" id="XB-GENE-972311">
    <property type="gene designation" value="ing3.L"/>
</dbReference>
<dbReference type="OMA" id="RYEWFHY"/>
<dbReference type="OrthoDB" id="5411773at2759"/>
<dbReference type="Proteomes" id="UP000186698">
    <property type="component" value="Chromosome 3L"/>
</dbReference>
<dbReference type="Bgee" id="379972">
    <property type="expression patterns" value="Expressed in testis and 19 other cell types or tissues"/>
</dbReference>
<dbReference type="GO" id="GO:0035267">
    <property type="term" value="C:NuA4 histone acetyltransferase complex"/>
    <property type="evidence" value="ECO:0000318"/>
    <property type="project" value="GO_Central"/>
</dbReference>
<dbReference type="GO" id="GO:0000812">
    <property type="term" value="C:Swr1 complex"/>
    <property type="evidence" value="ECO:0000250"/>
    <property type="project" value="UniProtKB"/>
</dbReference>
<dbReference type="GO" id="GO:0008270">
    <property type="term" value="F:zinc ion binding"/>
    <property type="evidence" value="ECO:0007669"/>
    <property type="project" value="UniProtKB-KW"/>
</dbReference>
<dbReference type="GO" id="GO:0006338">
    <property type="term" value="P:chromatin remodeling"/>
    <property type="evidence" value="ECO:0007669"/>
    <property type="project" value="GOC"/>
</dbReference>
<dbReference type="CDD" id="cd16858">
    <property type="entry name" value="ING_ING3_Yng2p"/>
    <property type="match status" value="1"/>
</dbReference>
<dbReference type="CDD" id="cd15585">
    <property type="entry name" value="PHD_ING3"/>
    <property type="match status" value="1"/>
</dbReference>
<dbReference type="FunFam" id="3.30.40.10:FF:000103">
    <property type="entry name" value="Inhibitor of growth protein"/>
    <property type="match status" value="1"/>
</dbReference>
<dbReference type="Gene3D" id="6.10.140.1740">
    <property type="match status" value="1"/>
</dbReference>
<dbReference type="Gene3D" id="3.30.40.10">
    <property type="entry name" value="Zinc/RING finger domain, C3HC4 (zinc finger)"/>
    <property type="match status" value="1"/>
</dbReference>
<dbReference type="InterPro" id="IPR042020">
    <property type="entry name" value="ING3_PHD"/>
</dbReference>
<dbReference type="InterPro" id="IPR028651">
    <property type="entry name" value="ING_fam"/>
</dbReference>
<dbReference type="InterPro" id="IPR024610">
    <property type="entry name" value="ING_N_histone-binding"/>
</dbReference>
<dbReference type="InterPro" id="IPR019786">
    <property type="entry name" value="Zinc_finger_PHD-type_CS"/>
</dbReference>
<dbReference type="InterPro" id="IPR011011">
    <property type="entry name" value="Znf_FYVE_PHD"/>
</dbReference>
<dbReference type="InterPro" id="IPR001965">
    <property type="entry name" value="Znf_PHD"/>
</dbReference>
<dbReference type="InterPro" id="IPR019787">
    <property type="entry name" value="Znf_PHD-finger"/>
</dbReference>
<dbReference type="InterPro" id="IPR013083">
    <property type="entry name" value="Znf_RING/FYVE/PHD"/>
</dbReference>
<dbReference type="PANTHER" id="PTHR10333">
    <property type="entry name" value="INHIBITOR OF GROWTH PROTEIN"/>
    <property type="match status" value="1"/>
</dbReference>
<dbReference type="PANTHER" id="PTHR10333:SF103">
    <property type="entry name" value="INHIBITOR OF GROWTH PROTEIN 3"/>
    <property type="match status" value="1"/>
</dbReference>
<dbReference type="Pfam" id="PF12998">
    <property type="entry name" value="ING"/>
    <property type="match status" value="1"/>
</dbReference>
<dbReference type="SMART" id="SM01408">
    <property type="entry name" value="ING"/>
    <property type="match status" value="1"/>
</dbReference>
<dbReference type="SMART" id="SM00249">
    <property type="entry name" value="PHD"/>
    <property type="match status" value="1"/>
</dbReference>
<dbReference type="SUPFAM" id="SSF57903">
    <property type="entry name" value="FYVE/PHD zinc finger"/>
    <property type="match status" value="1"/>
</dbReference>
<dbReference type="PROSITE" id="PS01359">
    <property type="entry name" value="ZF_PHD_1"/>
    <property type="match status" value="1"/>
</dbReference>
<dbReference type="PROSITE" id="PS50016">
    <property type="entry name" value="ZF_PHD_2"/>
    <property type="match status" value="1"/>
</dbReference>